<reference key="1">
    <citation type="journal article" date="2000" name="Nature">
        <title>Sequence and analysis of chromosome 3 of the plant Arabidopsis thaliana.</title>
        <authorList>
            <person name="Salanoubat M."/>
            <person name="Lemcke K."/>
            <person name="Rieger M."/>
            <person name="Ansorge W."/>
            <person name="Unseld M."/>
            <person name="Fartmann B."/>
            <person name="Valle G."/>
            <person name="Bloecker H."/>
            <person name="Perez-Alonso M."/>
            <person name="Obermaier B."/>
            <person name="Delseny M."/>
            <person name="Boutry M."/>
            <person name="Grivell L.A."/>
            <person name="Mache R."/>
            <person name="Puigdomenech P."/>
            <person name="De Simone V."/>
            <person name="Choisne N."/>
            <person name="Artiguenave F."/>
            <person name="Robert C."/>
            <person name="Brottier P."/>
            <person name="Wincker P."/>
            <person name="Cattolico L."/>
            <person name="Weissenbach J."/>
            <person name="Saurin W."/>
            <person name="Quetier F."/>
            <person name="Schaefer M."/>
            <person name="Mueller-Auer S."/>
            <person name="Gabel C."/>
            <person name="Fuchs M."/>
            <person name="Benes V."/>
            <person name="Wurmbach E."/>
            <person name="Drzonek H."/>
            <person name="Erfle H."/>
            <person name="Jordan N."/>
            <person name="Bangert S."/>
            <person name="Wiedelmann R."/>
            <person name="Kranz H."/>
            <person name="Voss H."/>
            <person name="Holland R."/>
            <person name="Brandt P."/>
            <person name="Nyakatura G."/>
            <person name="Vezzi A."/>
            <person name="D'Angelo M."/>
            <person name="Pallavicini A."/>
            <person name="Toppo S."/>
            <person name="Simionati B."/>
            <person name="Conrad A."/>
            <person name="Hornischer K."/>
            <person name="Kauer G."/>
            <person name="Loehnert T.-H."/>
            <person name="Nordsiek G."/>
            <person name="Reichelt J."/>
            <person name="Scharfe M."/>
            <person name="Schoen O."/>
            <person name="Bargues M."/>
            <person name="Terol J."/>
            <person name="Climent J."/>
            <person name="Navarro P."/>
            <person name="Collado C."/>
            <person name="Perez-Perez A."/>
            <person name="Ottenwaelder B."/>
            <person name="Duchemin D."/>
            <person name="Cooke R."/>
            <person name="Laudie M."/>
            <person name="Berger-Llauro C."/>
            <person name="Purnelle B."/>
            <person name="Masuy D."/>
            <person name="de Haan M."/>
            <person name="Maarse A.C."/>
            <person name="Alcaraz J.-P."/>
            <person name="Cottet A."/>
            <person name="Casacuberta E."/>
            <person name="Monfort A."/>
            <person name="Argiriou A."/>
            <person name="Flores M."/>
            <person name="Liguori R."/>
            <person name="Vitale D."/>
            <person name="Mannhaupt G."/>
            <person name="Haase D."/>
            <person name="Schoof H."/>
            <person name="Rudd S."/>
            <person name="Zaccaria P."/>
            <person name="Mewes H.-W."/>
            <person name="Mayer K.F.X."/>
            <person name="Kaul S."/>
            <person name="Town C.D."/>
            <person name="Koo H.L."/>
            <person name="Tallon L.J."/>
            <person name="Jenkins J."/>
            <person name="Rooney T."/>
            <person name="Rizzo M."/>
            <person name="Walts A."/>
            <person name="Utterback T."/>
            <person name="Fujii C.Y."/>
            <person name="Shea T.P."/>
            <person name="Creasy T.H."/>
            <person name="Haas B."/>
            <person name="Maiti R."/>
            <person name="Wu D."/>
            <person name="Peterson J."/>
            <person name="Van Aken S."/>
            <person name="Pai G."/>
            <person name="Militscher J."/>
            <person name="Sellers P."/>
            <person name="Gill J.E."/>
            <person name="Feldblyum T.V."/>
            <person name="Preuss D."/>
            <person name="Lin X."/>
            <person name="Nierman W.C."/>
            <person name="Salzberg S.L."/>
            <person name="White O."/>
            <person name="Venter J.C."/>
            <person name="Fraser C.M."/>
            <person name="Kaneko T."/>
            <person name="Nakamura Y."/>
            <person name="Sato S."/>
            <person name="Kato T."/>
            <person name="Asamizu E."/>
            <person name="Sasamoto S."/>
            <person name="Kimura T."/>
            <person name="Idesawa K."/>
            <person name="Kawashima K."/>
            <person name="Kishida Y."/>
            <person name="Kiyokawa C."/>
            <person name="Kohara M."/>
            <person name="Matsumoto M."/>
            <person name="Matsuno A."/>
            <person name="Muraki A."/>
            <person name="Nakayama S."/>
            <person name="Nakazaki N."/>
            <person name="Shinpo S."/>
            <person name="Takeuchi C."/>
            <person name="Wada T."/>
            <person name="Watanabe A."/>
            <person name="Yamada M."/>
            <person name="Yasuda M."/>
            <person name="Tabata S."/>
        </authorList>
    </citation>
    <scope>NUCLEOTIDE SEQUENCE [LARGE SCALE GENOMIC DNA]</scope>
    <source>
        <strain>cv. Columbia</strain>
    </source>
</reference>
<reference key="2">
    <citation type="journal article" date="2017" name="Plant J.">
        <title>Araport11: a complete reannotation of the Arabidopsis thaliana reference genome.</title>
        <authorList>
            <person name="Cheng C.Y."/>
            <person name="Krishnakumar V."/>
            <person name="Chan A.P."/>
            <person name="Thibaud-Nissen F."/>
            <person name="Schobel S."/>
            <person name="Town C.D."/>
        </authorList>
    </citation>
    <scope>GENOME REANNOTATION</scope>
    <source>
        <strain>cv. Columbia</strain>
    </source>
</reference>
<reference key="3">
    <citation type="journal article" date="2003" name="Science">
        <title>Empirical analysis of transcriptional activity in the Arabidopsis genome.</title>
        <authorList>
            <person name="Yamada K."/>
            <person name="Lim J."/>
            <person name="Dale J.M."/>
            <person name="Chen H."/>
            <person name="Shinn P."/>
            <person name="Palm C.J."/>
            <person name="Southwick A.M."/>
            <person name="Wu H.C."/>
            <person name="Kim C.J."/>
            <person name="Nguyen M."/>
            <person name="Pham P.K."/>
            <person name="Cheuk R.F."/>
            <person name="Karlin-Newmann G."/>
            <person name="Liu S.X."/>
            <person name="Lam B."/>
            <person name="Sakano H."/>
            <person name="Wu T."/>
            <person name="Yu G."/>
            <person name="Miranda M."/>
            <person name="Quach H.L."/>
            <person name="Tripp M."/>
            <person name="Chang C.H."/>
            <person name="Lee J.M."/>
            <person name="Toriumi M.J."/>
            <person name="Chan M.M."/>
            <person name="Tang C.C."/>
            <person name="Onodera C.S."/>
            <person name="Deng J.M."/>
            <person name="Akiyama K."/>
            <person name="Ansari Y."/>
            <person name="Arakawa T."/>
            <person name="Banh J."/>
            <person name="Banno F."/>
            <person name="Bowser L."/>
            <person name="Brooks S.Y."/>
            <person name="Carninci P."/>
            <person name="Chao Q."/>
            <person name="Choy N."/>
            <person name="Enju A."/>
            <person name="Goldsmith A.D."/>
            <person name="Gurjal M."/>
            <person name="Hansen N.F."/>
            <person name="Hayashizaki Y."/>
            <person name="Johnson-Hopson C."/>
            <person name="Hsuan V.W."/>
            <person name="Iida K."/>
            <person name="Karnes M."/>
            <person name="Khan S."/>
            <person name="Koesema E."/>
            <person name="Ishida J."/>
            <person name="Jiang P.X."/>
            <person name="Jones T."/>
            <person name="Kawai J."/>
            <person name="Kamiya A."/>
            <person name="Meyers C."/>
            <person name="Nakajima M."/>
            <person name="Narusaka M."/>
            <person name="Seki M."/>
            <person name="Sakurai T."/>
            <person name="Satou M."/>
            <person name="Tamse R."/>
            <person name="Vaysberg M."/>
            <person name="Wallender E.K."/>
            <person name="Wong C."/>
            <person name="Yamamura Y."/>
            <person name="Yuan S."/>
            <person name="Shinozaki K."/>
            <person name="Davis R.W."/>
            <person name="Theologis A."/>
            <person name="Ecker J.R."/>
        </authorList>
    </citation>
    <scope>NUCLEOTIDE SEQUENCE [LARGE SCALE MRNA]</scope>
    <source>
        <strain>cv. Columbia</strain>
    </source>
</reference>
<name>CAF1I_ARATH</name>
<proteinExistence type="evidence at transcript level"/>
<sequence>MAIIKPNRDLKPDGVTVVTREVWAENLESEFELISEIIDDYPFISMDTEFPGVIFKSDLRFTNPDDLYTLLKANVDALSLIQVGLTLSDVNGNLPDLGDDLHRGFIWEFNFRDFDVARDAHAPDSIELLRRQGIDFERNCRDGVESERFAELMMSSGLVCNEEVSWVTFHSAYDFGYLMKILTRRELPGALGEFKRVMRVLFGERVYDVKHMMKFCERRLFGGLDRVARTLEVNRAVGKCHQAGSDSLLTWHAFQRMRDLYFVQDGPEKHAGVLYGLEVF</sequence>
<protein>
    <recommendedName>
        <fullName>Probable CCR4-associated factor 1 homolog 9</fullName>
        <ecNumber>3.1.13.4</ecNumber>
    </recommendedName>
</protein>
<dbReference type="EC" id="3.1.13.4"/>
<dbReference type="EMBL" id="AL353865">
    <property type="protein sequence ID" value="CAB88994.1"/>
    <property type="molecule type" value="Genomic_DNA"/>
</dbReference>
<dbReference type="EMBL" id="CP002686">
    <property type="protein sequence ID" value="AEE77882.1"/>
    <property type="molecule type" value="Genomic_DNA"/>
</dbReference>
<dbReference type="EMBL" id="AY050848">
    <property type="protein sequence ID" value="AAK92783.1"/>
    <property type="molecule type" value="mRNA"/>
</dbReference>
<dbReference type="EMBL" id="AY117220">
    <property type="protein sequence ID" value="AAM51295.1"/>
    <property type="molecule type" value="mRNA"/>
</dbReference>
<dbReference type="PIR" id="T49142">
    <property type="entry name" value="T49142"/>
</dbReference>
<dbReference type="SMR" id="Q9LXM2"/>
<dbReference type="BioGRID" id="8871">
    <property type="interactions" value="2"/>
</dbReference>
<dbReference type="FunCoup" id="Q9LXM2">
    <property type="interactions" value="229"/>
</dbReference>
<dbReference type="IntAct" id="Q9LXM2">
    <property type="interactions" value="3"/>
</dbReference>
<dbReference type="STRING" id="3702.Q9LXM2"/>
<dbReference type="PaxDb" id="3702-AT3G44260.1"/>
<dbReference type="ProteomicsDB" id="222794"/>
<dbReference type="DNASU" id="823551"/>
<dbReference type="EnsemblPlants" id="AT3G44260.1">
    <property type="protein sequence ID" value="AT3G44260.1"/>
    <property type="gene ID" value="AT3G44260"/>
</dbReference>
<dbReference type="Gramene" id="AT3G44260.1">
    <property type="protein sequence ID" value="AT3G44260.1"/>
    <property type="gene ID" value="AT3G44260"/>
</dbReference>
<dbReference type="KEGG" id="ath:AT3G44260"/>
<dbReference type="Araport" id="AT3G44260"/>
<dbReference type="TAIR" id="AT3G44260">
    <property type="gene designation" value="CAF1A"/>
</dbReference>
<dbReference type="eggNOG" id="KOG0304">
    <property type="taxonomic scope" value="Eukaryota"/>
</dbReference>
<dbReference type="HOGENOM" id="CLU_027974_1_0_1"/>
<dbReference type="InParanoid" id="Q9LXM2"/>
<dbReference type="OMA" id="HTFQQIT"/>
<dbReference type="PhylomeDB" id="Q9LXM2"/>
<dbReference type="PRO" id="PR:Q9LXM2"/>
<dbReference type="Proteomes" id="UP000006548">
    <property type="component" value="Chromosome 3"/>
</dbReference>
<dbReference type="ExpressionAtlas" id="Q9LXM2">
    <property type="expression patterns" value="baseline and differential"/>
</dbReference>
<dbReference type="GO" id="GO:0030014">
    <property type="term" value="C:CCR4-NOT complex"/>
    <property type="evidence" value="ECO:0007669"/>
    <property type="project" value="InterPro"/>
</dbReference>
<dbReference type="GO" id="GO:0005737">
    <property type="term" value="C:cytoplasm"/>
    <property type="evidence" value="ECO:0007669"/>
    <property type="project" value="UniProtKB-SubCell"/>
</dbReference>
<dbReference type="GO" id="GO:0005634">
    <property type="term" value="C:nucleus"/>
    <property type="evidence" value="ECO:0007669"/>
    <property type="project" value="UniProtKB-SubCell"/>
</dbReference>
<dbReference type="GO" id="GO:0008408">
    <property type="term" value="F:3'-5' exonuclease activity"/>
    <property type="evidence" value="ECO:0000314"/>
    <property type="project" value="TAIR"/>
</dbReference>
<dbReference type="GO" id="GO:0046872">
    <property type="term" value="F:metal ion binding"/>
    <property type="evidence" value="ECO:0007669"/>
    <property type="project" value="UniProtKB-KW"/>
</dbReference>
<dbReference type="GO" id="GO:0004535">
    <property type="term" value="F:poly(A)-specific ribonuclease activity"/>
    <property type="evidence" value="ECO:0007669"/>
    <property type="project" value="UniProtKB-EC"/>
</dbReference>
<dbReference type="GO" id="GO:0003723">
    <property type="term" value="F:RNA binding"/>
    <property type="evidence" value="ECO:0007669"/>
    <property type="project" value="UniProtKB-KW"/>
</dbReference>
<dbReference type="GO" id="GO:0042742">
    <property type="term" value="P:defense response to bacterium"/>
    <property type="evidence" value="ECO:0000270"/>
    <property type="project" value="TAIR"/>
</dbReference>
<dbReference type="GO" id="GO:0002213">
    <property type="term" value="P:defense response to insect"/>
    <property type="evidence" value="ECO:0000270"/>
    <property type="project" value="TAIR"/>
</dbReference>
<dbReference type="GO" id="GO:0000289">
    <property type="term" value="P:nuclear-transcribed mRNA poly(A) tail shortening"/>
    <property type="evidence" value="ECO:0000315"/>
    <property type="project" value="TAIR"/>
</dbReference>
<dbReference type="GO" id="GO:0009611">
    <property type="term" value="P:response to wounding"/>
    <property type="evidence" value="ECO:0000270"/>
    <property type="project" value="TAIR"/>
</dbReference>
<dbReference type="FunFam" id="3.30.420.10:FF:000027">
    <property type="entry name" value="Putative CCR4-associated factor 1 7"/>
    <property type="match status" value="1"/>
</dbReference>
<dbReference type="Gene3D" id="3.30.420.10">
    <property type="entry name" value="Ribonuclease H-like superfamily/Ribonuclease H"/>
    <property type="match status" value="1"/>
</dbReference>
<dbReference type="InterPro" id="IPR039637">
    <property type="entry name" value="CNOT7/CNOT8/Pop2"/>
</dbReference>
<dbReference type="InterPro" id="IPR006941">
    <property type="entry name" value="RNase_CAF1"/>
</dbReference>
<dbReference type="InterPro" id="IPR012337">
    <property type="entry name" value="RNaseH-like_sf"/>
</dbReference>
<dbReference type="InterPro" id="IPR036397">
    <property type="entry name" value="RNaseH_sf"/>
</dbReference>
<dbReference type="PANTHER" id="PTHR10797">
    <property type="entry name" value="CCR4-NOT TRANSCRIPTION COMPLEX SUBUNIT"/>
    <property type="match status" value="1"/>
</dbReference>
<dbReference type="Pfam" id="PF04857">
    <property type="entry name" value="CAF1"/>
    <property type="match status" value="1"/>
</dbReference>
<dbReference type="SUPFAM" id="SSF53098">
    <property type="entry name" value="Ribonuclease H-like"/>
    <property type="match status" value="1"/>
</dbReference>
<organism>
    <name type="scientific">Arabidopsis thaliana</name>
    <name type="common">Mouse-ear cress</name>
    <dbReference type="NCBI Taxonomy" id="3702"/>
    <lineage>
        <taxon>Eukaryota</taxon>
        <taxon>Viridiplantae</taxon>
        <taxon>Streptophyta</taxon>
        <taxon>Embryophyta</taxon>
        <taxon>Tracheophyta</taxon>
        <taxon>Spermatophyta</taxon>
        <taxon>Magnoliopsida</taxon>
        <taxon>eudicotyledons</taxon>
        <taxon>Gunneridae</taxon>
        <taxon>Pentapetalae</taxon>
        <taxon>rosids</taxon>
        <taxon>malvids</taxon>
        <taxon>Brassicales</taxon>
        <taxon>Brassicaceae</taxon>
        <taxon>Camelineae</taxon>
        <taxon>Arabidopsis</taxon>
    </lineage>
</organism>
<gene>
    <name type="primary">CAF1-9</name>
    <name type="ordered locus">At3g44260</name>
    <name type="ORF">T10D17_50</name>
</gene>
<evidence type="ECO:0000250" key="1"/>
<evidence type="ECO:0000305" key="2"/>
<keyword id="KW-0963">Cytoplasm</keyword>
<keyword id="KW-0269">Exonuclease</keyword>
<keyword id="KW-0378">Hydrolase</keyword>
<keyword id="KW-0479">Metal-binding</keyword>
<keyword id="KW-0540">Nuclease</keyword>
<keyword id="KW-0539">Nucleus</keyword>
<keyword id="KW-1185">Reference proteome</keyword>
<keyword id="KW-0694">RNA-binding</keyword>
<keyword id="KW-0804">Transcription</keyword>
<keyword id="KW-0805">Transcription regulation</keyword>
<comment type="function">
    <text evidence="1">Ubiquitous transcription factor required for a diverse set of processes. It is a component of the CCR4 complex involved in the control of gene expression (By similarity).</text>
</comment>
<comment type="catalytic activity">
    <reaction>
        <text>Exonucleolytic cleavage of poly(A) to 5'-AMP.</text>
        <dbReference type="EC" id="3.1.13.4"/>
    </reaction>
</comment>
<comment type="cofactor">
    <cofactor evidence="1">
        <name>a divalent metal cation</name>
        <dbReference type="ChEBI" id="CHEBI:60240"/>
    </cofactor>
</comment>
<comment type="subunit">
    <text evidence="1">Component of the CCR4-NOT complex, at least composed of CRR4 and CAF1 proteins.</text>
</comment>
<comment type="subcellular location">
    <subcellularLocation>
        <location evidence="1">Nucleus</location>
    </subcellularLocation>
    <subcellularLocation>
        <location evidence="1">Cytoplasm</location>
    </subcellularLocation>
</comment>
<comment type="similarity">
    <text evidence="2">Belongs to the CAF1 family.</text>
</comment>
<accession>Q9LXM2</accession>
<feature type="chain" id="PRO_0000371559" description="Probable CCR4-associated factor 1 homolog 9">
    <location>
        <begin position="1"/>
        <end position="280"/>
    </location>
</feature>
<feature type="binding site" evidence="1">
    <location>
        <position position="47"/>
    </location>
    <ligand>
        <name>a divalent metal cation</name>
        <dbReference type="ChEBI" id="CHEBI:60240"/>
        <note>catalytic</note>
    </ligand>
</feature>
<feature type="binding site" evidence="1">
    <location>
        <position position="49"/>
    </location>
    <ligand>
        <name>a divalent metal cation</name>
        <dbReference type="ChEBI" id="CHEBI:60240"/>
        <note>catalytic</note>
    </ligand>
</feature>
<feature type="binding site" evidence="1">
    <location>
        <position position="174"/>
    </location>
    <ligand>
        <name>a divalent metal cation</name>
        <dbReference type="ChEBI" id="CHEBI:60240"/>
        <note>catalytic</note>
    </ligand>
</feature>
<feature type="binding site" evidence="1">
    <location>
        <position position="246"/>
    </location>
    <ligand>
        <name>a divalent metal cation</name>
        <dbReference type="ChEBI" id="CHEBI:60240"/>
        <note>catalytic</note>
    </ligand>
</feature>